<protein>
    <recommendedName>
        <fullName evidence="1">Phosphomethylpyrimidine synthase</fullName>
        <ecNumber evidence="1">4.1.99.17</ecNumber>
    </recommendedName>
    <alternativeName>
        <fullName evidence="1">Hydroxymethylpyrimidine phosphate synthase</fullName>
        <shortName evidence="1">HMP-P synthase</shortName>
        <shortName evidence="1">HMP-phosphate synthase</shortName>
        <shortName evidence="1">HMPP synthase</shortName>
    </alternativeName>
    <alternativeName>
        <fullName evidence="1">Thiamine biosynthesis protein ThiC</fullName>
    </alternativeName>
</protein>
<organism>
    <name type="scientific">Clostridium acetobutylicum (strain ATCC 824 / DSM 792 / JCM 1419 / IAM 19013 / LMG 5710 / NBRC 13948 / NRRL B-527 / VKM B-1787 / 2291 / W)</name>
    <dbReference type="NCBI Taxonomy" id="272562"/>
    <lineage>
        <taxon>Bacteria</taxon>
        <taxon>Bacillati</taxon>
        <taxon>Bacillota</taxon>
        <taxon>Clostridia</taxon>
        <taxon>Eubacteriales</taxon>
        <taxon>Clostridiaceae</taxon>
        <taxon>Clostridium</taxon>
    </lineage>
</organism>
<accession>Q97EU2</accession>
<sequence length="436" mass="48495">MDYTTQMDAAKKNVTTKEMEVVAEKEQMEISELKMLMAEGKIVIPANKNHKSLSAEGVGQGLKTKINVNLGISKDCQNVDMEMKKVEIAIAMKAEAIMDLSSFGKTEEFRKKLINMSKAMIGTVPIYDAIGFYDKELKDITAEEMIGVVEKQAKEGVDFMTIHAGINRETAETFKRNKRAMNIVSRGGSLLYAWMELNNKENPFYEYYDKILDICEKYDVTISLGDACRPGCIDDSTDASQITELIKLGELTKRAWDRNVQVMVEGPGHMALNEIQSNMIIEKKLCHGAPFYVLGPIVTDIAPGYDHITSAIGGAVAAASGADFLCYVTPAEHLRLPNIEDMKEGIVASKIAAHAADIAKNVKGARDWDNKMAEARQKLDWKAMFDLSIDPEKAIRYRKESTPEDPDTCTMCGKMCSVRNMNKVMAGKDVNILRED</sequence>
<name>THIC_CLOAB</name>
<gene>
    <name evidence="1" type="primary">thiC</name>
    <name type="ordered locus">CA_C3014</name>
</gene>
<feature type="chain" id="PRO_0000152796" description="Phosphomethylpyrimidine synthase">
    <location>
        <begin position="1"/>
        <end position="436"/>
    </location>
</feature>
<feature type="binding site" evidence="1">
    <location>
        <position position="69"/>
    </location>
    <ligand>
        <name>substrate</name>
    </ligand>
</feature>
<feature type="binding site" evidence="1">
    <location>
        <position position="98"/>
    </location>
    <ligand>
        <name>substrate</name>
    </ligand>
</feature>
<feature type="binding site" evidence="1">
    <location>
        <position position="127"/>
    </location>
    <ligand>
        <name>substrate</name>
    </ligand>
</feature>
<feature type="binding site" evidence="1">
    <location>
        <position position="163"/>
    </location>
    <ligand>
        <name>substrate</name>
    </ligand>
</feature>
<feature type="binding site" evidence="1">
    <location>
        <begin position="185"/>
        <end position="187"/>
    </location>
    <ligand>
        <name>substrate</name>
    </ligand>
</feature>
<feature type="binding site" evidence="1">
    <location>
        <begin position="226"/>
        <end position="229"/>
    </location>
    <ligand>
        <name>substrate</name>
    </ligand>
</feature>
<feature type="binding site" evidence="1">
    <location>
        <position position="265"/>
    </location>
    <ligand>
        <name>substrate</name>
    </ligand>
</feature>
<feature type="binding site" evidence="1">
    <location>
        <position position="269"/>
    </location>
    <ligand>
        <name>Zn(2+)</name>
        <dbReference type="ChEBI" id="CHEBI:29105"/>
    </ligand>
</feature>
<feature type="binding site" evidence="1">
    <location>
        <position position="292"/>
    </location>
    <ligand>
        <name>substrate</name>
    </ligand>
</feature>
<feature type="binding site" evidence="1">
    <location>
        <position position="333"/>
    </location>
    <ligand>
        <name>Zn(2+)</name>
        <dbReference type="ChEBI" id="CHEBI:29105"/>
    </ligand>
</feature>
<feature type="binding site" evidence="1">
    <location>
        <position position="409"/>
    </location>
    <ligand>
        <name>[4Fe-4S] cluster</name>
        <dbReference type="ChEBI" id="CHEBI:49883"/>
        <note>4Fe-4S-S-AdoMet</note>
    </ligand>
</feature>
<feature type="binding site" evidence="1">
    <location>
        <position position="412"/>
    </location>
    <ligand>
        <name>[4Fe-4S] cluster</name>
        <dbReference type="ChEBI" id="CHEBI:49883"/>
        <note>4Fe-4S-S-AdoMet</note>
    </ligand>
</feature>
<feature type="binding site" evidence="1">
    <location>
        <position position="416"/>
    </location>
    <ligand>
        <name>[4Fe-4S] cluster</name>
        <dbReference type="ChEBI" id="CHEBI:49883"/>
        <note>4Fe-4S-S-AdoMet</note>
    </ligand>
</feature>
<evidence type="ECO:0000255" key="1">
    <source>
        <dbReference type="HAMAP-Rule" id="MF_00089"/>
    </source>
</evidence>
<dbReference type="EC" id="4.1.99.17" evidence="1"/>
<dbReference type="EMBL" id="AE001437">
    <property type="protein sequence ID" value="AAK80955.1"/>
    <property type="molecule type" value="Genomic_DNA"/>
</dbReference>
<dbReference type="PIR" id="H97270">
    <property type="entry name" value="H97270"/>
</dbReference>
<dbReference type="RefSeq" id="NP_349615.1">
    <property type="nucleotide sequence ID" value="NC_003030.1"/>
</dbReference>
<dbReference type="RefSeq" id="WP_010966296.1">
    <property type="nucleotide sequence ID" value="NC_003030.1"/>
</dbReference>
<dbReference type="SMR" id="Q97EU2"/>
<dbReference type="STRING" id="272562.CA_C3014"/>
<dbReference type="GeneID" id="44999501"/>
<dbReference type="KEGG" id="cac:CA_C3014"/>
<dbReference type="PATRIC" id="fig|272562.8.peg.3197"/>
<dbReference type="eggNOG" id="COG0422">
    <property type="taxonomic scope" value="Bacteria"/>
</dbReference>
<dbReference type="HOGENOM" id="CLU_013181_2_2_9"/>
<dbReference type="OrthoDB" id="9805897at2"/>
<dbReference type="UniPathway" id="UPA00060"/>
<dbReference type="Proteomes" id="UP000000814">
    <property type="component" value="Chromosome"/>
</dbReference>
<dbReference type="GO" id="GO:0005829">
    <property type="term" value="C:cytosol"/>
    <property type="evidence" value="ECO:0007669"/>
    <property type="project" value="TreeGrafter"/>
</dbReference>
<dbReference type="GO" id="GO:0051539">
    <property type="term" value="F:4 iron, 4 sulfur cluster binding"/>
    <property type="evidence" value="ECO:0007669"/>
    <property type="project" value="UniProtKB-KW"/>
</dbReference>
<dbReference type="GO" id="GO:0016830">
    <property type="term" value="F:carbon-carbon lyase activity"/>
    <property type="evidence" value="ECO:0007669"/>
    <property type="project" value="InterPro"/>
</dbReference>
<dbReference type="GO" id="GO:0008270">
    <property type="term" value="F:zinc ion binding"/>
    <property type="evidence" value="ECO:0007669"/>
    <property type="project" value="UniProtKB-UniRule"/>
</dbReference>
<dbReference type="GO" id="GO:0009228">
    <property type="term" value="P:thiamine biosynthetic process"/>
    <property type="evidence" value="ECO:0007669"/>
    <property type="project" value="UniProtKB-KW"/>
</dbReference>
<dbReference type="GO" id="GO:0009229">
    <property type="term" value="P:thiamine diphosphate biosynthetic process"/>
    <property type="evidence" value="ECO:0007669"/>
    <property type="project" value="UniProtKB-UniRule"/>
</dbReference>
<dbReference type="FunFam" id="3.20.20.540:FF:000001">
    <property type="entry name" value="Phosphomethylpyrimidine synthase"/>
    <property type="match status" value="1"/>
</dbReference>
<dbReference type="Gene3D" id="6.10.250.620">
    <property type="match status" value="1"/>
</dbReference>
<dbReference type="Gene3D" id="3.20.20.540">
    <property type="entry name" value="Radical SAM ThiC family, central domain"/>
    <property type="match status" value="1"/>
</dbReference>
<dbReference type="HAMAP" id="MF_00089">
    <property type="entry name" value="ThiC"/>
    <property type="match status" value="1"/>
</dbReference>
<dbReference type="InterPro" id="IPR037509">
    <property type="entry name" value="ThiC"/>
</dbReference>
<dbReference type="InterPro" id="IPR038521">
    <property type="entry name" value="ThiC/Bza_core_dom"/>
</dbReference>
<dbReference type="InterPro" id="IPR002817">
    <property type="entry name" value="ThiC/BzaA/B"/>
</dbReference>
<dbReference type="NCBIfam" id="NF009895">
    <property type="entry name" value="PRK13352.1"/>
    <property type="match status" value="1"/>
</dbReference>
<dbReference type="NCBIfam" id="TIGR00190">
    <property type="entry name" value="thiC"/>
    <property type="match status" value="1"/>
</dbReference>
<dbReference type="PANTHER" id="PTHR30557:SF1">
    <property type="entry name" value="PHOSPHOMETHYLPYRIMIDINE SYNTHASE, CHLOROPLASTIC"/>
    <property type="match status" value="1"/>
</dbReference>
<dbReference type="PANTHER" id="PTHR30557">
    <property type="entry name" value="THIAMINE BIOSYNTHESIS PROTEIN THIC"/>
    <property type="match status" value="1"/>
</dbReference>
<dbReference type="Pfam" id="PF01964">
    <property type="entry name" value="ThiC_Rad_SAM"/>
    <property type="match status" value="1"/>
</dbReference>
<dbReference type="SFLD" id="SFLDF00407">
    <property type="entry name" value="phosphomethylpyrimidine_syntha"/>
    <property type="match status" value="1"/>
</dbReference>
<dbReference type="SFLD" id="SFLDG01114">
    <property type="entry name" value="phosphomethylpyrimidine_syntha"/>
    <property type="match status" value="1"/>
</dbReference>
<dbReference type="SFLD" id="SFLDS00113">
    <property type="entry name" value="Radical_SAM_Phosphomethylpyrim"/>
    <property type="match status" value="1"/>
</dbReference>
<keyword id="KW-0004">4Fe-4S</keyword>
<keyword id="KW-0408">Iron</keyword>
<keyword id="KW-0411">Iron-sulfur</keyword>
<keyword id="KW-0456">Lyase</keyword>
<keyword id="KW-0479">Metal-binding</keyword>
<keyword id="KW-1185">Reference proteome</keyword>
<keyword id="KW-0949">S-adenosyl-L-methionine</keyword>
<keyword id="KW-0784">Thiamine biosynthesis</keyword>
<keyword id="KW-0862">Zinc</keyword>
<reference key="1">
    <citation type="journal article" date="2001" name="J. Bacteriol.">
        <title>Genome sequence and comparative analysis of the solvent-producing bacterium Clostridium acetobutylicum.</title>
        <authorList>
            <person name="Noelling J."/>
            <person name="Breton G."/>
            <person name="Omelchenko M.V."/>
            <person name="Makarova K.S."/>
            <person name="Zeng Q."/>
            <person name="Gibson R."/>
            <person name="Lee H.M."/>
            <person name="Dubois J."/>
            <person name="Qiu D."/>
            <person name="Hitti J."/>
            <person name="Wolf Y.I."/>
            <person name="Tatusov R.L."/>
            <person name="Sabathe F."/>
            <person name="Doucette-Stamm L.A."/>
            <person name="Soucaille P."/>
            <person name="Daly M.J."/>
            <person name="Bennett G.N."/>
            <person name="Koonin E.V."/>
            <person name="Smith D.R."/>
        </authorList>
    </citation>
    <scope>NUCLEOTIDE SEQUENCE [LARGE SCALE GENOMIC DNA]</scope>
    <source>
        <strain>ATCC 824 / DSM 792 / JCM 1419 / IAM 19013 / LMG 5710 / NBRC 13948 / NRRL B-527 / VKM B-1787 / 2291 / W</strain>
    </source>
</reference>
<proteinExistence type="inferred from homology"/>
<comment type="function">
    <text evidence="1">Catalyzes the synthesis of the hydroxymethylpyrimidine phosphate (HMP-P) moiety of thiamine from aminoimidazole ribotide (AIR) in a radical S-adenosyl-L-methionine (SAM)-dependent reaction.</text>
</comment>
<comment type="catalytic activity">
    <reaction evidence="1">
        <text>5-amino-1-(5-phospho-beta-D-ribosyl)imidazole + S-adenosyl-L-methionine = 4-amino-2-methyl-5-(phosphooxymethyl)pyrimidine + CO + 5'-deoxyadenosine + formate + L-methionine + 3 H(+)</text>
        <dbReference type="Rhea" id="RHEA:24840"/>
        <dbReference type="ChEBI" id="CHEBI:15378"/>
        <dbReference type="ChEBI" id="CHEBI:15740"/>
        <dbReference type="ChEBI" id="CHEBI:17245"/>
        <dbReference type="ChEBI" id="CHEBI:17319"/>
        <dbReference type="ChEBI" id="CHEBI:57844"/>
        <dbReference type="ChEBI" id="CHEBI:58354"/>
        <dbReference type="ChEBI" id="CHEBI:59789"/>
        <dbReference type="ChEBI" id="CHEBI:137981"/>
        <dbReference type="EC" id="4.1.99.17"/>
    </reaction>
</comment>
<comment type="cofactor">
    <cofactor evidence="1">
        <name>[4Fe-4S] cluster</name>
        <dbReference type="ChEBI" id="CHEBI:49883"/>
    </cofactor>
    <text evidence="1">Binds 1 [4Fe-4S] cluster per subunit. The cluster is coordinated with 3 cysteines and an exchangeable S-adenosyl-L-methionine.</text>
</comment>
<comment type="pathway">
    <text evidence="1">Cofactor biosynthesis; thiamine diphosphate biosynthesis.</text>
</comment>
<comment type="similarity">
    <text evidence="1">Belongs to the ThiC family.</text>
</comment>